<organism>
    <name type="scientific">Psychrobacter sp. (strain PRwf-1)</name>
    <dbReference type="NCBI Taxonomy" id="349106"/>
    <lineage>
        <taxon>Bacteria</taxon>
        <taxon>Pseudomonadati</taxon>
        <taxon>Pseudomonadota</taxon>
        <taxon>Gammaproteobacteria</taxon>
        <taxon>Moraxellales</taxon>
        <taxon>Moraxellaceae</taxon>
        <taxon>Psychrobacter</taxon>
    </lineage>
</organism>
<evidence type="ECO:0000255" key="1">
    <source>
        <dbReference type="HAMAP-Rule" id="MF_00362"/>
    </source>
</evidence>
<evidence type="ECO:0000305" key="2"/>
<keyword id="KW-0687">Ribonucleoprotein</keyword>
<keyword id="KW-0689">Ribosomal protein</keyword>
<keyword id="KW-0694">RNA-binding</keyword>
<keyword id="KW-0699">rRNA-binding</keyword>
<accession>A5WH37</accession>
<name>RL10_PSYWF</name>
<comment type="function">
    <text evidence="1">Forms part of the ribosomal stalk, playing a central role in the interaction of the ribosome with GTP-bound translation factors.</text>
</comment>
<comment type="subunit">
    <text evidence="1">Part of the ribosomal stalk of the 50S ribosomal subunit. The N-terminus interacts with L11 and the large rRNA to form the base of the stalk. The C-terminus forms an elongated spine to which L12 dimers bind in a sequential fashion forming a multimeric L10(L12)X complex.</text>
</comment>
<comment type="similarity">
    <text evidence="1">Belongs to the universal ribosomal protein uL10 family.</text>
</comment>
<dbReference type="EMBL" id="CP000713">
    <property type="protein sequence ID" value="ABQ94978.1"/>
    <property type="molecule type" value="Genomic_DNA"/>
</dbReference>
<dbReference type="SMR" id="A5WH37"/>
<dbReference type="STRING" id="349106.PsycPRwf_2038"/>
<dbReference type="KEGG" id="prw:PsycPRwf_2038"/>
<dbReference type="eggNOG" id="COG0244">
    <property type="taxonomic scope" value="Bacteria"/>
</dbReference>
<dbReference type="HOGENOM" id="CLU_092227_0_1_6"/>
<dbReference type="GO" id="GO:1990904">
    <property type="term" value="C:ribonucleoprotein complex"/>
    <property type="evidence" value="ECO:0007669"/>
    <property type="project" value="UniProtKB-KW"/>
</dbReference>
<dbReference type="GO" id="GO:0005840">
    <property type="term" value="C:ribosome"/>
    <property type="evidence" value="ECO:0007669"/>
    <property type="project" value="UniProtKB-KW"/>
</dbReference>
<dbReference type="GO" id="GO:0070180">
    <property type="term" value="F:large ribosomal subunit rRNA binding"/>
    <property type="evidence" value="ECO:0007669"/>
    <property type="project" value="UniProtKB-UniRule"/>
</dbReference>
<dbReference type="GO" id="GO:0006412">
    <property type="term" value="P:translation"/>
    <property type="evidence" value="ECO:0007669"/>
    <property type="project" value="UniProtKB-UniRule"/>
</dbReference>
<dbReference type="CDD" id="cd05797">
    <property type="entry name" value="Ribosomal_L10"/>
    <property type="match status" value="1"/>
</dbReference>
<dbReference type="Gene3D" id="3.30.70.1730">
    <property type="match status" value="1"/>
</dbReference>
<dbReference type="Gene3D" id="6.10.250.2350">
    <property type="match status" value="1"/>
</dbReference>
<dbReference type="HAMAP" id="MF_00362">
    <property type="entry name" value="Ribosomal_uL10"/>
    <property type="match status" value="1"/>
</dbReference>
<dbReference type="InterPro" id="IPR001790">
    <property type="entry name" value="Ribosomal_uL10"/>
</dbReference>
<dbReference type="InterPro" id="IPR043141">
    <property type="entry name" value="Ribosomal_uL10-like_sf"/>
</dbReference>
<dbReference type="InterPro" id="IPR022973">
    <property type="entry name" value="Ribosomal_uL10_bac"/>
</dbReference>
<dbReference type="InterPro" id="IPR047865">
    <property type="entry name" value="Ribosomal_uL10_bac_type"/>
</dbReference>
<dbReference type="NCBIfam" id="NF000955">
    <property type="entry name" value="PRK00099.1-1"/>
    <property type="match status" value="1"/>
</dbReference>
<dbReference type="PANTHER" id="PTHR11560">
    <property type="entry name" value="39S RIBOSOMAL PROTEIN L10, MITOCHONDRIAL"/>
    <property type="match status" value="1"/>
</dbReference>
<dbReference type="Pfam" id="PF00466">
    <property type="entry name" value="Ribosomal_L10"/>
    <property type="match status" value="1"/>
</dbReference>
<dbReference type="SUPFAM" id="SSF160369">
    <property type="entry name" value="Ribosomal protein L10-like"/>
    <property type="match status" value="1"/>
</dbReference>
<sequence>MALTLEQKQKVVAEVSEVAANAYSAVAADYHGLEVAQLTKLRNQAREKGVVLKVVKNTLAKRAFEGTSFECMSDKMVGPLLLAFSTEDLGSAARVIHEFAKEHKALEPKLVSVGGELFGPEEIERVAKLPTRDEALSILMATMKAPVTKLARTMKEVPGKFVRTVAAVKDAKEAA</sequence>
<reference key="1">
    <citation type="submission" date="2007-05" db="EMBL/GenBank/DDBJ databases">
        <title>Complete sequence of chromosome of Psychrobacter sp. PRwf-1.</title>
        <authorList>
            <consortium name="US DOE Joint Genome Institute"/>
            <person name="Copeland A."/>
            <person name="Lucas S."/>
            <person name="Lapidus A."/>
            <person name="Barry K."/>
            <person name="Detter J.C."/>
            <person name="Glavina del Rio T."/>
            <person name="Hammon N."/>
            <person name="Israni S."/>
            <person name="Dalin E."/>
            <person name="Tice H."/>
            <person name="Pitluck S."/>
            <person name="Chain P."/>
            <person name="Malfatti S."/>
            <person name="Shin M."/>
            <person name="Vergez L."/>
            <person name="Schmutz J."/>
            <person name="Larimer F."/>
            <person name="Land M."/>
            <person name="Hauser L."/>
            <person name="Kyrpides N."/>
            <person name="Kim E."/>
            <person name="Tiedje J."/>
            <person name="Richardson P."/>
        </authorList>
    </citation>
    <scope>NUCLEOTIDE SEQUENCE [LARGE SCALE GENOMIC DNA]</scope>
    <source>
        <strain>PRwf-1</strain>
    </source>
</reference>
<gene>
    <name evidence="1" type="primary">rplJ</name>
    <name type="ordered locus">PsycPRwf_2038</name>
</gene>
<feature type="chain" id="PRO_1000072091" description="Large ribosomal subunit protein uL10">
    <location>
        <begin position="1"/>
        <end position="175"/>
    </location>
</feature>
<proteinExistence type="inferred from homology"/>
<protein>
    <recommendedName>
        <fullName evidence="1">Large ribosomal subunit protein uL10</fullName>
    </recommendedName>
    <alternativeName>
        <fullName evidence="2">50S ribosomal protein L10</fullName>
    </alternativeName>
</protein>